<evidence type="ECO:0000255" key="1"/>
<evidence type="ECO:0000305" key="2"/>
<comment type="subcellular location">
    <subcellularLocation>
        <location evidence="2">Membrane</location>
        <topology evidence="2">Single-pass membrane protein</topology>
    </subcellularLocation>
</comment>
<feature type="chain" id="PRO_0000348519" description="Putative uncharacterized transmembrane protein DDB_G0285779">
    <location>
        <begin position="1"/>
        <end position="57"/>
    </location>
</feature>
<feature type="transmembrane region" description="Helical" evidence="1">
    <location>
        <begin position="15"/>
        <end position="37"/>
    </location>
</feature>
<sequence length="57" mass="5873">MSFGLTGLTGTGLAGLAGLICIGLTISSGFSGSSILIHIHSLVQMHNLGTVYISYYK</sequence>
<gene>
    <name type="ORF">DDB_G0285779</name>
</gene>
<reference key="1">
    <citation type="journal article" date="2005" name="Nature">
        <title>The genome of the social amoeba Dictyostelium discoideum.</title>
        <authorList>
            <person name="Eichinger L."/>
            <person name="Pachebat J.A."/>
            <person name="Gloeckner G."/>
            <person name="Rajandream M.A."/>
            <person name="Sucgang R."/>
            <person name="Berriman M."/>
            <person name="Song J."/>
            <person name="Olsen R."/>
            <person name="Szafranski K."/>
            <person name="Xu Q."/>
            <person name="Tunggal B."/>
            <person name="Kummerfeld S."/>
            <person name="Madera M."/>
            <person name="Konfortov B.A."/>
            <person name="Rivero F."/>
            <person name="Bankier A.T."/>
            <person name="Lehmann R."/>
            <person name="Hamlin N."/>
            <person name="Davies R."/>
            <person name="Gaudet P."/>
            <person name="Fey P."/>
            <person name="Pilcher K."/>
            <person name="Chen G."/>
            <person name="Saunders D."/>
            <person name="Sodergren E.J."/>
            <person name="Davis P."/>
            <person name="Kerhornou A."/>
            <person name="Nie X."/>
            <person name="Hall N."/>
            <person name="Anjard C."/>
            <person name="Hemphill L."/>
            <person name="Bason N."/>
            <person name="Farbrother P."/>
            <person name="Desany B."/>
            <person name="Just E."/>
            <person name="Morio T."/>
            <person name="Rost R."/>
            <person name="Churcher C.M."/>
            <person name="Cooper J."/>
            <person name="Haydock S."/>
            <person name="van Driessche N."/>
            <person name="Cronin A."/>
            <person name="Goodhead I."/>
            <person name="Muzny D.M."/>
            <person name="Mourier T."/>
            <person name="Pain A."/>
            <person name="Lu M."/>
            <person name="Harper D."/>
            <person name="Lindsay R."/>
            <person name="Hauser H."/>
            <person name="James K.D."/>
            <person name="Quiles M."/>
            <person name="Madan Babu M."/>
            <person name="Saito T."/>
            <person name="Buchrieser C."/>
            <person name="Wardroper A."/>
            <person name="Felder M."/>
            <person name="Thangavelu M."/>
            <person name="Johnson D."/>
            <person name="Knights A."/>
            <person name="Loulseged H."/>
            <person name="Mungall K.L."/>
            <person name="Oliver K."/>
            <person name="Price C."/>
            <person name="Quail M.A."/>
            <person name="Urushihara H."/>
            <person name="Hernandez J."/>
            <person name="Rabbinowitsch E."/>
            <person name="Steffen D."/>
            <person name="Sanders M."/>
            <person name="Ma J."/>
            <person name="Kohara Y."/>
            <person name="Sharp S."/>
            <person name="Simmonds M.N."/>
            <person name="Spiegler S."/>
            <person name="Tivey A."/>
            <person name="Sugano S."/>
            <person name="White B."/>
            <person name="Walker D."/>
            <person name="Woodward J.R."/>
            <person name="Winckler T."/>
            <person name="Tanaka Y."/>
            <person name="Shaulsky G."/>
            <person name="Schleicher M."/>
            <person name="Weinstock G.M."/>
            <person name="Rosenthal A."/>
            <person name="Cox E.C."/>
            <person name="Chisholm R.L."/>
            <person name="Gibbs R.A."/>
            <person name="Loomis W.F."/>
            <person name="Platzer M."/>
            <person name="Kay R.R."/>
            <person name="Williams J.G."/>
            <person name="Dear P.H."/>
            <person name="Noegel A.A."/>
            <person name="Barrell B.G."/>
            <person name="Kuspa A."/>
        </authorList>
    </citation>
    <scope>NUCLEOTIDE SEQUENCE [LARGE SCALE GENOMIC DNA]</scope>
    <source>
        <strain>AX4</strain>
    </source>
</reference>
<organism>
    <name type="scientific">Dictyostelium discoideum</name>
    <name type="common">Social amoeba</name>
    <dbReference type="NCBI Taxonomy" id="44689"/>
    <lineage>
        <taxon>Eukaryota</taxon>
        <taxon>Amoebozoa</taxon>
        <taxon>Evosea</taxon>
        <taxon>Eumycetozoa</taxon>
        <taxon>Dictyostelia</taxon>
        <taxon>Dictyosteliales</taxon>
        <taxon>Dictyosteliaceae</taxon>
        <taxon>Dictyostelium</taxon>
    </lineage>
</organism>
<accession>Q54MW0</accession>
<keyword id="KW-0472">Membrane</keyword>
<keyword id="KW-1185">Reference proteome</keyword>
<keyword id="KW-0812">Transmembrane</keyword>
<keyword id="KW-1133">Transmembrane helix</keyword>
<protein>
    <recommendedName>
        <fullName>Putative uncharacterized transmembrane protein DDB_G0285779</fullName>
    </recommendedName>
</protein>
<dbReference type="EMBL" id="AAFI02000079">
    <property type="protein sequence ID" value="EAL64727.1"/>
    <property type="molecule type" value="Genomic_DNA"/>
</dbReference>
<dbReference type="RefSeq" id="XP_638183.1">
    <property type="nucleotide sequence ID" value="XM_633091.1"/>
</dbReference>
<dbReference type="PaxDb" id="44689-DDB0218739"/>
<dbReference type="EnsemblProtists" id="EAL64727">
    <property type="protein sequence ID" value="EAL64727"/>
    <property type="gene ID" value="DDB_G0285779"/>
</dbReference>
<dbReference type="GeneID" id="8625230"/>
<dbReference type="KEGG" id="ddi:DDB_G0285779"/>
<dbReference type="dictyBase" id="DDB_G0285779"/>
<dbReference type="HOGENOM" id="CLU_3000420_0_0_1"/>
<dbReference type="InParanoid" id="Q54MW0"/>
<dbReference type="PRO" id="PR:Q54MW0"/>
<dbReference type="Proteomes" id="UP000002195">
    <property type="component" value="Chromosome 4"/>
</dbReference>
<dbReference type="GO" id="GO:0016020">
    <property type="term" value="C:membrane"/>
    <property type="evidence" value="ECO:0007669"/>
    <property type="project" value="UniProtKB-SubCell"/>
</dbReference>
<name>Y8739_DICDI</name>
<proteinExistence type="predicted"/>